<feature type="chain" id="PRO_1000084150" description="NAD(P)H dehydrogenase (quinone)">
    <location>
        <begin position="1"/>
        <end position="199"/>
    </location>
</feature>
<feature type="domain" description="Flavodoxin-like" evidence="1">
    <location>
        <begin position="4"/>
        <end position="190"/>
    </location>
</feature>
<feature type="binding site" evidence="1">
    <location>
        <begin position="10"/>
        <end position="15"/>
    </location>
    <ligand>
        <name>FMN</name>
        <dbReference type="ChEBI" id="CHEBI:58210"/>
    </ligand>
</feature>
<feature type="binding site" evidence="1">
    <location>
        <position position="12"/>
    </location>
    <ligand>
        <name>NAD(+)</name>
        <dbReference type="ChEBI" id="CHEBI:57540"/>
    </ligand>
</feature>
<feature type="binding site" evidence="1">
    <location>
        <begin position="79"/>
        <end position="81"/>
    </location>
    <ligand>
        <name>FMN</name>
        <dbReference type="ChEBI" id="CHEBI:58210"/>
    </ligand>
</feature>
<feature type="binding site" evidence="1">
    <location>
        <position position="99"/>
    </location>
    <ligand>
        <name>substrate</name>
    </ligand>
</feature>
<feature type="binding site" evidence="1">
    <location>
        <begin position="114"/>
        <end position="119"/>
    </location>
    <ligand>
        <name>FMN</name>
        <dbReference type="ChEBI" id="CHEBI:58210"/>
    </ligand>
</feature>
<feature type="binding site" evidence="1">
    <location>
        <position position="134"/>
    </location>
    <ligand>
        <name>FMN</name>
        <dbReference type="ChEBI" id="CHEBI:58210"/>
    </ligand>
</feature>
<name>NQOR_YERPP</name>
<organism>
    <name type="scientific">Yersinia pestis (strain Pestoides F)</name>
    <dbReference type="NCBI Taxonomy" id="386656"/>
    <lineage>
        <taxon>Bacteria</taxon>
        <taxon>Pseudomonadati</taxon>
        <taxon>Pseudomonadota</taxon>
        <taxon>Gammaproteobacteria</taxon>
        <taxon>Enterobacterales</taxon>
        <taxon>Yersiniaceae</taxon>
        <taxon>Yersinia</taxon>
    </lineage>
</organism>
<dbReference type="EC" id="1.6.5.2" evidence="1"/>
<dbReference type="EMBL" id="CP000668">
    <property type="protein sequence ID" value="ABP39661.1"/>
    <property type="molecule type" value="Genomic_DNA"/>
</dbReference>
<dbReference type="SMR" id="A4TK49"/>
<dbReference type="KEGG" id="ypp:YPDSF_1268"/>
<dbReference type="PATRIC" id="fig|386656.14.peg.2537"/>
<dbReference type="GO" id="GO:0016020">
    <property type="term" value="C:membrane"/>
    <property type="evidence" value="ECO:0007669"/>
    <property type="project" value="TreeGrafter"/>
</dbReference>
<dbReference type="GO" id="GO:0050660">
    <property type="term" value="F:flavin adenine dinucleotide binding"/>
    <property type="evidence" value="ECO:0007669"/>
    <property type="project" value="UniProtKB-UniRule"/>
</dbReference>
<dbReference type="GO" id="GO:0010181">
    <property type="term" value="F:FMN binding"/>
    <property type="evidence" value="ECO:0007669"/>
    <property type="project" value="InterPro"/>
</dbReference>
<dbReference type="GO" id="GO:0051287">
    <property type="term" value="F:NAD binding"/>
    <property type="evidence" value="ECO:0007669"/>
    <property type="project" value="UniProtKB-UniRule"/>
</dbReference>
<dbReference type="GO" id="GO:0050136">
    <property type="term" value="F:NADH:ubiquinone reductase (non-electrogenic) activity"/>
    <property type="evidence" value="ECO:0007669"/>
    <property type="project" value="RHEA"/>
</dbReference>
<dbReference type="GO" id="GO:0050661">
    <property type="term" value="F:NADP binding"/>
    <property type="evidence" value="ECO:0007669"/>
    <property type="project" value="UniProtKB-UniRule"/>
</dbReference>
<dbReference type="GO" id="GO:0008753">
    <property type="term" value="F:NADPH dehydrogenase (quinone) activity"/>
    <property type="evidence" value="ECO:0007669"/>
    <property type="project" value="RHEA"/>
</dbReference>
<dbReference type="FunFam" id="3.40.50.360:FF:000004">
    <property type="entry name" value="NAD(P)H dehydrogenase (quinone)"/>
    <property type="match status" value="1"/>
</dbReference>
<dbReference type="Gene3D" id="3.40.50.360">
    <property type="match status" value="1"/>
</dbReference>
<dbReference type="HAMAP" id="MF_01017">
    <property type="entry name" value="NQOR"/>
    <property type="match status" value="1"/>
</dbReference>
<dbReference type="InterPro" id="IPR008254">
    <property type="entry name" value="Flavodoxin/NO_synth"/>
</dbReference>
<dbReference type="InterPro" id="IPR029039">
    <property type="entry name" value="Flavoprotein-like_sf"/>
</dbReference>
<dbReference type="InterPro" id="IPR010089">
    <property type="entry name" value="Flavoprotein_WrbA-like"/>
</dbReference>
<dbReference type="InterPro" id="IPR005025">
    <property type="entry name" value="FMN_Rdtase-like_dom"/>
</dbReference>
<dbReference type="InterPro" id="IPR037513">
    <property type="entry name" value="NQO"/>
</dbReference>
<dbReference type="NCBIfam" id="TIGR01755">
    <property type="entry name" value="flav_wrbA"/>
    <property type="match status" value="1"/>
</dbReference>
<dbReference type="NCBIfam" id="NF002999">
    <property type="entry name" value="PRK03767.1"/>
    <property type="match status" value="1"/>
</dbReference>
<dbReference type="PANTHER" id="PTHR30546">
    <property type="entry name" value="FLAVODOXIN-RELATED PROTEIN WRBA-RELATED"/>
    <property type="match status" value="1"/>
</dbReference>
<dbReference type="PANTHER" id="PTHR30546:SF23">
    <property type="entry name" value="FLAVOPROTEIN-LIKE PROTEIN YCP4-RELATED"/>
    <property type="match status" value="1"/>
</dbReference>
<dbReference type="Pfam" id="PF03358">
    <property type="entry name" value="FMN_red"/>
    <property type="match status" value="1"/>
</dbReference>
<dbReference type="SUPFAM" id="SSF52218">
    <property type="entry name" value="Flavoproteins"/>
    <property type="match status" value="1"/>
</dbReference>
<dbReference type="PROSITE" id="PS50902">
    <property type="entry name" value="FLAVODOXIN_LIKE"/>
    <property type="match status" value="1"/>
</dbReference>
<accession>A4TK49</accession>
<reference key="1">
    <citation type="submission" date="2007-02" db="EMBL/GenBank/DDBJ databases">
        <title>Complete sequence of chromosome of Yersinia pestis Pestoides F.</title>
        <authorList>
            <consortium name="US DOE Joint Genome Institute"/>
            <person name="Copeland A."/>
            <person name="Lucas S."/>
            <person name="Lapidus A."/>
            <person name="Barry K."/>
            <person name="Detter J.C."/>
            <person name="Glavina del Rio T."/>
            <person name="Hammon N."/>
            <person name="Israni S."/>
            <person name="Dalin E."/>
            <person name="Tice H."/>
            <person name="Pitluck S."/>
            <person name="Di Bartolo G."/>
            <person name="Chain P."/>
            <person name="Malfatti S."/>
            <person name="Shin M."/>
            <person name="Vergez L."/>
            <person name="Schmutz J."/>
            <person name="Larimer F."/>
            <person name="Land M."/>
            <person name="Hauser L."/>
            <person name="Worsham P."/>
            <person name="Chu M."/>
            <person name="Bearden S."/>
            <person name="Garcia E."/>
            <person name="Richardson P."/>
        </authorList>
    </citation>
    <scope>NUCLEOTIDE SEQUENCE [LARGE SCALE GENOMIC DNA]</scope>
    <source>
        <strain>Pestoides F</strain>
    </source>
</reference>
<evidence type="ECO:0000255" key="1">
    <source>
        <dbReference type="HAMAP-Rule" id="MF_01017"/>
    </source>
</evidence>
<gene>
    <name type="ordered locus">YPDSF_1268</name>
</gene>
<proteinExistence type="inferred from homology"/>
<protein>
    <recommendedName>
        <fullName evidence="1">NAD(P)H dehydrogenase (quinone)</fullName>
        <ecNumber evidence="1">1.6.5.2</ecNumber>
    </recommendedName>
    <alternativeName>
        <fullName>Flavoprotein WrbA</fullName>
    </alternativeName>
    <alternativeName>
        <fullName evidence="1">NAD(P)H:quinone oxidoreductase</fullName>
        <shortName evidence="1">NQO</shortName>
    </alternativeName>
</protein>
<sequence>MAKILVLYYSMYGHIETLAGAIAEGARKVSGVDVTIKRVPETMPAEAFAKAGGKTNQQAPVATPHELADYDGIIFGTPTRFGNMSGQMRTFLDQTGGLWASGALYGKVASVFASTGTGGGQEHTITSTWTTLAHHGFIIVPIGYGAKELFDVSQTRGGTPYGATTIAGGDGSRQPSAEELAIARFQGEHVAKITAKLKG</sequence>
<comment type="catalytic activity">
    <reaction evidence="1">
        <text>a quinone + NADH + H(+) = a quinol + NAD(+)</text>
        <dbReference type="Rhea" id="RHEA:46160"/>
        <dbReference type="ChEBI" id="CHEBI:15378"/>
        <dbReference type="ChEBI" id="CHEBI:24646"/>
        <dbReference type="ChEBI" id="CHEBI:57540"/>
        <dbReference type="ChEBI" id="CHEBI:57945"/>
        <dbReference type="ChEBI" id="CHEBI:132124"/>
        <dbReference type="EC" id="1.6.5.2"/>
    </reaction>
</comment>
<comment type="catalytic activity">
    <reaction evidence="1">
        <text>a quinone + NADPH + H(+) = a quinol + NADP(+)</text>
        <dbReference type="Rhea" id="RHEA:46164"/>
        <dbReference type="ChEBI" id="CHEBI:15378"/>
        <dbReference type="ChEBI" id="CHEBI:24646"/>
        <dbReference type="ChEBI" id="CHEBI:57783"/>
        <dbReference type="ChEBI" id="CHEBI:58349"/>
        <dbReference type="ChEBI" id="CHEBI:132124"/>
        <dbReference type="EC" id="1.6.5.2"/>
    </reaction>
</comment>
<comment type="cofactor">
    <cofactor evidence="1">
        <name>FMN</name>
        <dbReference type="ChEBI" id="CHEBI:58210"/>
    </cofactor>
    <text evidence="1">Binds 1 FMN per monomer.</text>
</comment>
<comment type="similarity">
    <text evidence="1">Belongs to the WrbA family.</text>
</comment>
<keyword id="KW-0285">Flavoprotein</keyword>
<keyword id="KW-0288">FMN</keyword>
<keyword id="KW-0520">NAD</keyword>
<keyword id="KW-0521">NADP</keyword>
<keyword id="KW-0547">Nucleotide-binding</keyword>
<keyword id="KW-0560">Oxidoreductase</keyword>